<organism>
    <name type="scientific">Herminiimonas arsenicoxydans</name>
    <dbReference type="NCBI Taxonomy" id="204773"/>
    <lineage>
        <taxon>Bacteria</taxon>
        <taxon>Pseudomonadati</taxon>
        <taxon>Pseudomonadota</taxon>
        <taxon>Betaproteobacteria</taxon>
        <taxon>Burkholderiales</taxon>
        <taxon>Oxalobacteraceae</taxon>
        <taxon>Herminiimonas</taxon>
    </lineage>
</organism>
<name>YIDC_HERAR</name>
<keyword id="KW-0997">Cell inner membrane</keyword>
<keyword id="KW-1003">Cell membrane</keyword>
<keyword id="KW-0143">Chaperone</keyword>
<keyword id="KW-0472">Membrane</keyword>
<keyword id="KW-0653">Protein transport</keyword>
<keyword id="KW-1185">Reference proteome</keyword>
<keyword id="KW-0812">Transmembrane</keyword>
<keyword id="KW-1133">Transmembrane helix</keyword>
<keyword id="KW-0813">Transport</keyword>
<reference key="1">
    <citation type="journal article" date="2007" name="PLoS Genet.">
        <title>A tale of two oxidation states: bacterial colonization of arsenic-rich environments.</title>
        <authorList>
            <person name="Muller D."/>
            <person name="Medigue C."/>
            <person name="Koechler S."/>
            <person name="Barbe V."/>
            <person name="Barakat M."/>
            <person name="Talla E."/>
            <person name="Bonnefoy V."/>
            <person name="Krin E."/>
            <person name="Arsene-Ploetze F."/>
            <person name="Carapito C."/>
            <person name="Chandler M."/>
            <person name="Cournoyer B."/>
            <person name="Cruveiller S."/>
            <person name="Dossat C."/>
            <person name="Duval S."/>
            <person name="Heymann M."/>
            <person name="Leize E."/>
            <person name="Lieutaud A."/>
            <person name="Lievremont D."/>
            <person name="Makita Y."/>
            <person name="Mangenot S."/>
            <person name="Nitschke W."/>
            <person name="Ortet P."/>
            <person name="Perdrial N."/>
            <person name="Schoepp B."/>
            <person name="Siguier P."/>
            <person name="Simeonova D.D."/>
            <person name="Rouy Z."/>
            <person name="Segurens B."/>
            <person name="Turlin E."/>
            <person name="Vallenet D."/>
            <person name="van Dorsselaer A."/>
            <person name="Weiss S."/>
            <person name="Weissenbach J."/>
            <person name="Lett M.-C."/>
            <person name="Danchin A."/>
            <person name="Bertin P.N."/>
        </authorList>
    </citation>
    <scope>NUCLEOTIDE SEQUENCE [LARGE SCALE GENOMIC DNA]</scope>
    <source>
        <strain>ULPAs1</strain>
    </source>
</reference>
<dbReference type="EMBL" id="CU207211">
    <property type="protein sequence ID" value="CAL63570.1"/>
    <property type="molecule type" value="Genomic_DNA"/>
</dbReference>
<dbReference type="SMR" id="A4GAN3"/>
<dbReference type="STRING" id="204773.HEAR3469"/>
<dbReference type="KEGG" id="har:HEAR3469"/>
<dbReference type="eggNOG" id="COG0706">
    <property type="taxonomic scope" value="Bacteria"/>
</dbReference>
<dbReference type="HOGENOM" id="CLU_016535_3_0_4"/>
<dbReference type="OrthoDB" id="9780552at2"/>
<dbReference type="Proteomes" id="UP000006697">
    <property type="component" value="Chromosome"/>
</dbReference>
<dbReference type="GO" id="GO:0005886">
    <property type="term" value="C:plasma membrane"/>
    <property type="evidence" value="ECO:0007669"/>
    <property type="project" value="UniProtKB-SubCell"/>
</dbReference>
<dbReference type="GO" id="GO:0032977">
    <property type="term" value="F:membrane insertase activity"/>
    <property type="evidence" value="ECO:0007669"/>
    <property type="project" value="InterPro"/>
</dbReference>
<dbReference type="GO" id="GO:0051205">
    <property type="term" value="P:protein insertion into membrane"/>
    <property type="evidence" value="ECO:0007669"/>
    <property type="project" value="TreeGrafter"/>
</dbReference>
<dbReference type="GO" id="GO:0015031">
    <property type="term" value="P:protein transport"/>
    <property type="evidence" value="ECO:0007669"/>
    <property type="project" value="UniProtKB-KW"/>
</dbReference>
<dbReference type="CDD" id="cd20070">
    <property type="entry name" value="5TM_YidC_Alb3"/>
    <property type="match status" value="1"/>
</dbReference>
<dbReference type="CDD" id="cd19961">
    <property type="entry name" value="EcYidC-like_peri"/>
    <property type="match status" value="1"/>
</dbReference>
<dbReference type="Gene3D" id="2.70.98.90">
    <property type="match status" value="1"/>
</dbReference>
<dbReference type="HAMAP" id="MF_01810">
    <property type="entry name" value="YidC_type1"/>
    <property type="match status" value="1"/>
</dbReference>
<dbReference type="InterPro" id="IPR019998">
    <property type="entry name" value="Membr_insert_YidC"/>
</dbReference>
<dbReference type="InterPro" id="IPR028053">
    <property type="entry name" value="Membr_insert_YidC_N"/>
</dbReference>
<dbReference type="InterPro" id="IPR001708">
    <property type="entry name" value="YidC/ALB3/OXA1/COX18"/>
</dbReference>
<dbReference type="InterPro" id="IPR028055">
    <property type="entry name" value="YidC/Oxa/ALB_C"/>
</dbReference>
<dbReference type="InterPro" id="IPR047196">
    <property type="entry name" value="YidC_ALB_C"/>
</dbReference>
<dbReference type="InterPro" id="IPR038221">
    <property type="entry name" value="YidC_periplasmic_sf"/>
</dbReference>
<dbReference type="NCBIfam" id="NF002352">
    <property type="entry name" value="PRK01318.1-3"/>
    <property type="match status" value="1"/>
</dbReference>
<dbReference type="NCBIfam" id="NF002353">
    <property type="entry name" value="PRK01318.1-4"/>
    <property type="match status" value="1"/>
</dbReference>
<dbReference type="NCBIfam" id="TIGR03593">
    <property type="entry name" value="yidC_nterm"/>
    <property type="match status" value="1"/>
</dbReference>
<dbReference type="NCBIfam" id="TIGR03592">
    <property type="entry name" value="yidC_oxa1_cterm"/>
    <property type="match status" value="1"/>
</dbReference>
<dbReference type="PANTHER" id="PTHR12428:SF65">
    <property type="entry name" value="CYTOCHROME C OXIDASE ASSEMBLY PROTEIN COX18, MITOCHONDRIAL"/>
    <property type="match status" value="1"/>
</dbReference>
<dbReference type="PANTHER" id="PTHR12428">
    <property type="entry name" value="OXA1"/>
    <property type="match status" value="1"/>
</dbReference>
<dbReference type="Pfam" id="PF02096">
    <property type="entry name" value="60KD_IMP"/>
    <property type="match status" value="1"/>
</dbReference>
<dbReference type="Pfam" id="PF14849">
    <property type="entry name" value="YidC_periplas"/>
    <property type="match status" value="1"/>
</dbReference>
<dbReference type="PRINTS" id="PR00701">
    <property type="entry name" value="60KDINNERMP"/>
</dbReference>
<dbReference type="PRINTS" id="PR01900">
    <property type="entry name" value="YIDCPROTEIN"/>
</dbReference>
<sequence>MDIKRTVLWVIFSFSLLMLWDNYNRYTGKPSIFFDSTTTQQAAAPAATGNNAAKTADAPTAATTAATSGANTPGVPDGAAAVKSEVITITTDLMKIGIDTAGGEVRHLELLKHHESGDESKNVVLFDENGQHTYLGQTGLIGGAYPNHKSMFAAVPGPRTLDSANQVQLVLQSEQQGVKLIKTFTFKRGEYKVDIKHDVVNNTSTAITPSLYLQLVHDGSALGGGSMFMASAFTGPAIYTEADKFQKVTFESIEKGKAEHAMKGESGWIALVQHYFVSAFVPPANTPREYFTKKLATNLYAVGTILPMGTVAPGATASMDTTMYSGPQESKRLEAVAPGFELVKDYGWLTIIAKPIFWLMMQIHQILGNWGWTIIVLTIVIKLAFFPLSAAGYRSMAKMKLVTPKMTDIRTRYKGEPQKMNAAMMELYKKEKINPIGGCFPMLVQIPVFISLYWVLLASVEIRNASWLWIHDLAAPDILFGSYHIGTFHLTIGILPILMAISMFIQTKLNPTPPDPIQAKVMMFMPIAFSVMFFFFPAGLVLYWVVNNILSIAQQWFINEKLLGGKAKA</sequence>
<gene>
    <name evidence="1" type="primary">yidC</name>
    <name type="ordered locus">HEAR3469</name>
</gene>
<proteinExistence type="inferred from homology"/>
<protein>
    <recommendedName>
        <fullName evidence="1">Membrane protein insertase YidC</fullName>
    </recommendedName>
    <alternativeName>
        <fullName evidence="1">Foldase YidC</fullName>
    </alternativeName>
    <alternativeName>
        <fullName evidence="1">Membrane integrase YidC</fullName>
    </alternativeName>
    <alternativeName>
        <fullName evidence="1">Membrane protein YidC</fullName>
    </alternativeName>
</protein>
<evidence type="ECO:0000255" key="1">
    <source>
        <dbReference type="HAMAP-Rule" id="MF_01810"/>
    </source>
</evidence>
<accession>A4GAN3</accession>
<feature type="chain" id="PRO_1000070108" description="Membrane protein insertase YidC">
    <location>
        <begin position="1"/>
        <end position="569"/>
    </location>
</feature>
<feature type="transmembrane region" description="Helical" evidence="1">
    <location>
        <begin position="7"/>
        <end position="24"/>
    </location>
</feature>
<feature type="transmembrane region" description="Helical" evidence="1">
    <location>
        <begin position="219"/>
        <end position="239"/>
    </location>
</feature>
<feature type="transmembrane region" description="Helical" evidence="1">
    <location>
        <begin position="299"/>
        <end position="319"/>
    </location>
</feature>
<feature type="transmembrane region" description="Helical" evidence="1">
    <location>
        <begin position="340"/>
        <end position="360"/>
    </location>
</feature>
<feature type="transmembrane region" description="Helical" evidence="1">
    <location>
        <begin position="366"/>
        <end position="386"/>
    </location>
</feature>
<feature type="transmembrane region" description="Helical" evidence="1">
    <location>
        <begin position="436"/>
        <end position="456"/>
    </location>
</feature>
<feature type="transmembrane region" description="Helical" evidence="1">
    <location>
        <begin position="485"/>
        <end position="505"/>
    </location>
</feature>
<feature type="transmembrane region" description="Helical" evidence="1">
    <location>
        <begin position="526"/>
        <end position="546"/>
    </location>
</feature>
<comment type="function">
    <text evidence="1">Required for the insertion and/or proper folding and/or complex formation of integral membrane proteins into the membrane. Involved in integration of membrane proteins that insert both dependently and independently of the Sec translocase complex, as well as at least some lipoproteins. Aids folding of multispanning membrane proteins.</text>
</comment>
<comment type="subunit">
    <text evidence="1">Interacts with the Sec translocase complex via SecD. Specifically interacts with transmembrane segments of nascent integral membrane proteins during membrane integration.</text>
</comment>
<comment type="subcellular location">
    <subcellularLocation>
        <location evidence="1">Cell inner membrane</location>
        <topology evidence="1">Multi-pass membrane protein</topology>
    </subcellularLocation>
</comment>
<comment type="similarity">
    <text evidence="1">Belongs to the OXA1/ALB3/YidC family. Type 1 subfamily.</text>
</comment>